<reference key="1">
    <citation type="journal article" date="2000" name="Nature">
        <title>DNA sequence of both chromosomes of the cholera pathogen Vibrio cholerae.</title>
        <authorList>
            <person name="Heidelberg J.F."/>
            <person name="Eisen J.A."/>
            <person name="Nelson W.C."/>
            <person name="Clayton R.A."/>
            <person name="Gwinn M.L."/>
            <person name="Dodson R.J."/>
            <person name="Haft D.H."/>
            <person name="Hickey E.K."/>
            <person name="Peterson J.D."/>
            <person name="Umayam L.A."/>
            <person name="Gill S.R."/>
            <person name="Nelson K.E."/>
            <person name="Read T.D."/>
            <person name="Tettelin H."/>
            <person name="Richardson D.L."/>
            <person name="Ermolaeva M.D."/>
            <person name="Vamathevan J.J."/>
            <person name="Bass S."/>
            <person name="Qin H."/>
            <person name="Dragoi I."/>
            <person name="Sellers P."/>
            <person name="McDonald L.A."/>
            <person name="Utterback T.R."/>
            <person name="Fleischmann R.D."/>
            <person name="Nierman W.C."/>
            <person name="White O."/>
            <person name="Salzberg S.L."/>
            <person name="Smith H.O."/>
            <person name="Colwell R.R."/>
            <person name="Mekalanos J.J."/>
            <person name="Venter J.C."/>
            <person name="Fraser C.M."/>
        </authorList>
    </citation>
    <scope>NUCLEOTIDE SEQUENCE [LARGE SCALE GENOMIC DNA]</scope>
    <source>
        <strain>ATCC 39315 / El Tor Inaba N16961</strain>
    </source>
</reference>
<keyword id="KW-0963">Cytoplasm</keyword>
<keyword id="KW-0342">GTP-binding</keyword>
<keyword id="KW-0378">Hydrolase</keyword>
<keyword id="KW-0479">Metal-binding</keyword>
<keyword id="KW-0547">Nucleotide-binding</keyword>
<keyword id="KW-1185">Reference proteome</keyword>
<keyword id="KW-0690">Ribosome biogenesis</keyword>
<keyword id="KW-0694">RNA-binding</keyword>
<keyword id="KW-0699">rRNA-binding</keyword>
<keyword id="KW-0862">Zinc</keyword>
<accession>Q9KV18</accession>
<protein>
    <recommendedName>
        <fullName evidence="1">Small ribosomal subunit biogenesis GTPase RsgA</fullName>
        <ecNumber evidence="1">3.6.1.-</ecNumber>
    </recommendedName>
</protein>
<comment type="function">
    <text evidence="1">One of several proteins that assist in the late maturation steps of the functional core of the 30S ribosomal subunit. Helps release RbfA from mature subunits. May play a role in the assembly of ribosomal proteins into the subunit. Circularly permuted GTPase that catalyzes slow GTP hydrolysis, GTPase activity is stimulated by the 30S ribosomal subunit.</text>
</comment>
<comment type="cofactor">
    <cofactor evidence="1">
        <name>Zn(2+)</name>
        <dbReference type="ChEBI" id="CHEBI:29105"/>
    </cofactor>
    <text evidence="1">Binds 1 zinc ion per subunit.</text>
</comment>
<comment type="subunit">
    <text evidence="1">Monomer. Associates with 30S ribosomal subunit, binds 16S rRNA.</text>
</comment>
<comment type="subcellular location">
    <subcellularLocation>
        <location evidence="1">Cytoplasm</location>
    </subcellularLocation>
</comment>
<comment type="similarity">
    <text evidence="1">Belongs to the TRAFAC class YlqF/YawG GTPase family. RsgA subfamily.</text>
</comment>
<evidence type="ECO:0000255" key="1">
    <source>
        <dbReference type="HAMAP-Rule" id="MF_01820"/>
    </source>
</evidence>
<evidence type="ECO:0000255" key="2">
    <source>
        <dbReference type="PROSITE-ProRule" id="PRU01058"/>
    </source>
</evidence>
<sequence length="387" mass="42941">MTKKKKLTHGQVRRVRNNQHKKLKQEESIVWDEALLGSAQPGLVITRFGQHADIEDPVTGEIHRCNLRRGIESLVSGDNVLWRPGAETLAGISGVVEAVEARSSVLVRPDYYDGLKPVAANVDQMVIVSSVLPELSLNIIDRYLIASETLGIAPLIVLNKIDLLSPELREQYSTWLNDYRAIGYDVLYVSKKTGEGIADLEVKLRDRTNVFVGQSGVGKSSLVNALLPELEEDVEEGAISETSGLGQHTTTAARLYHIPSGGDLIDSPGVREFGLWHLETDDVTKAYVEFRPYLGGCKFRDCKHGDDPGCLLREAVSKGEISALRFDNYHRIVQSMTENKANRQYSRSKKPICKSKLLASLEHLLTEGAIFSNISRPSPLYWNVNHG</sequence>
<gene>
    <name evidence="1" type="primary">rsgA</name>
    <name type="ordered locus">VC_0340</name>
</gene>
<name>RSGA_VIBCH</name>
<organism>
    <name type="scientific">Vibrio cholerae serotype O1 (strain ATCC 39315 / El Tor Inaba N16961)</name>
    <dbReference type="NCBI Taxonomy" id="243277"/>
    <lineage>
        <taxon>Bacteria</taxon>
        <taxon>Pseudomonadati</taxon>
        <taxon>Pseudomonadota</taxon>
        <taxon>Gammaproteobacteria</taxon>
        <taxon>Vibrionales</taxon>
        <taxon>Vibrionaceae</taxon>
        <taxon>Vibrio</taxon>
    </lineage>
</organism>
<proteinExistence type="inferred from homology"/>
<dbReference type="EC" id="3.6.1.-" evidence="1"/>
<dbReference type="EMBL" id="AE003852">
    <property type="protein sequence ID" value="AAF93513.1"/>
    <property type="molecule type" value="Genomic_DNA"/>
</dbReference>
<dbReference type="PIR" id="C82336">
    <property type="entry name" value="C82336"/>
</dbReference>
<dbReference type="RefSeq" id="NP_229994.1">
    <property type="nucleotide sequence ID" value="NC_002505.1"/>
</dbReference>
<dbReference type="RefSeq" id="WP_000162647.1">
    <property type="nucleotide sequence ID" value="NC_002505.1"/>
</dbReference>
<dbReference type="SMR" id="Q9KV18"/>
<dbReference type="STRING" id="243277.VC_0340"/>
<dbReference type="EnsemblBacteria" id="AAF93513">
    <property type="protein sequence ID" value="AAF93513"/>
    <property type="gene ID" value="VC_0340"/>
</dbReference>
<dbReference type="KEGG" id="vch:VC_0340"/>
<dbReference type="PATRIC" id="fig|243277.26.peg.317"/>
<dbReference type="eggNOG" id="COG1162">
    <property type="taxonomic scope" value="Bacteria"/>
</dbReference>
<dbReference type="HOGENOM" id="CLU_033617_2_0_6"/>
<dbReference type="Proteomes" id="UP000000584">
    <property type="component" value="Chromosome 1"/>
</dbReference>
<dbReference type="GO" id="GO:0005737">
    <property type="term" value="C:cytoplasm"/>
    <property type="evidence" value="ECO:0007669"/>
    <property type="project" value="UniProtKB-SubCell"/>
</dbReference>
<dbReference type="GO" id="GO:0005525">
    <property type="term" value="F:GTP binding"/>
    <property type="evidence" value="ECO:0007669"/>
    <property type="project" value="UniProtKB-UniRule"/>
</dbReference>
<dbReference type="GO" id="GO:0003924">
    <property type="term" value="F:GTPase activity"/>
    <property type="evidence" value="ECO:0007669"/>
    <property type="project" value="UniProtKB-UniRule"/>
</dbReference>
<dbReference type="GO" id="GO:0046872">
    <property type="term" value="F:metal ion binding"/>
    <property type="evidence" value="ECO:0007669"/>
    <property type="project" value="UniProtKB-KW"/>
</dbReference>
<dbReference type="GO" id="GO:0019843">
    <property type="term" value="F:rRNA binding"/>
    <property type="evidence" value="ECO:0007669"/>
    <property type="project" value="UniProtKB-KW"/>
</dbReference>
<dbReference type="GO" id="GO:0042274">
    <property type="term" value="P:ribosomal small subunit biogenesis"/>
    <property type="evidence" value="ECO:0007669"/>
    <property type="project" value="UniProtKB-UniRule"/>
</dbReference>
<dbReference type="CDD" id="cd01854">
    <property type="entry name" value="YjeQ_EngC"/>
    <property type="match status" value="1"/>
</dbReference>
<dbReference type="Gene3D" id="2.40.50.140">
    <property type="entry name" value="Nucleic acid-binding proteins"/>
    <property type="match status" value="1"/>
</dbReference>
<dbReference type="Gene3D" id="3.40.50.300">
    <property type="entry name" value="P-loop containing nucleotide triphosphate hydrolases"/>
    <property type="match status" value="1"/>
</dbReference>
<dbReference type="Gene3D" id="1.10.40.50">
    <property type="entry name" value="Probable gtpase engc, domain 3"/>
    <property type="match status" value="1"/>
</dbReference>
<dbReference type="HAMAP" id="MF_01820">
    <property type="entry name" value="GTPase_RsgA"/>
    <property type="match status" value="1"/>
</dbReference>
<dbReference type="InterPro" id="IPR030378">
    <property type="entry name" value="G_CP_dom"/>
</dbReference>
<dbReference type="InterPro" id="IPR012340">
    <property type="entry name" value="NA-bd_OB-fold"/>
</dbReference>
<dbReference type="InterPro" id="IPR027417">
    <property type="entry name" value="P-loop_NTPase"/>
</dbReference>
<dbReference type="InterPro" id="IPR004881">
    <property type="entry name" value="Ribosome_biogen_GTPase_RsgA"/>
</dbReference>
<dbReference type="InterPro" id="IPR010914">
    <property type="entry name" value="RsgA_GTPase_dom"/>
</dbReference>
<dbReference type="NCBIfam" id="NF008931">
    <property type="entry name" value="PRK12288.1"/>
    <property type="match status" value="1"/>
</dbReference>
<dbReference type="NCBIfam" id="TIGR00157">
    <property type="entry name" value="ribosome small subunit-dependent GTPase A"/>
    <property type="match status" value="1"/>
</dbReference>
<dbReference type="PANTHER" id="PTHR32120">
    <property type="entry name" value="SMALL RIBOSOMAL SUBUNIT BIOGENESIS GTPASE RSGA"/>
    <property type="match status" value="1"/>
</dbReference>
<dbReference type="PANTHER" id="PTHR32120:SF11">
    <property type="entry name" value="SMALL RIBOSOMAL SUBUNIT BIOGENESIS GTPASE RSGA 1, MITOCHONDRIAL-RELATED"/>
    <property type="match status" value="1"/>
</dbReference>
<dbReference type="Pfam" id="PF03193">
    <property type="entry name" value="RsgA_GTPase"/>
    <property type="match status" value="1"/>
</dbReference>
<dbReference type="SUPFAM" id="SSF52540">
    <property type="entry name" value="P-loop containing nucleoside triphosphate hydrolases"/>
    <property type="match status" value="1"/>
</dbReference>
<dbReference type="PROSITE" id="PS50936">
    <property type="entry name" value="ENGC_GTPASE"/>
    <property type="match status" value="1"/>
</dbReference>
<dbReference type="PROSITE" id="PS51721">
    <property type="entry name" value="G_CP"/>
    <property type="match status" value="1"/>
</dbReference>
<feature type="chain" id="PRO_0000171539" description="Small ribosomal subunit biogenesis GTPase RsgA">
    <location>
        <begin position="1"/>
        <end position="387"/>
    </location>
</feature>
<feature type="domain" description="CP-type G" evidence="2">
    <location>
        <begin position="112"/>
        <end position="273"/>
    </location>
</feature>
<feature type="binding site" evidence="1">
    <location>
        <begin position="159"/>
        <end position="162"/>
    </location>
    <ligand>
        <name>GTP</name>
        <dbReference type="ChEBI" id="CHEBI:37565"/>
    </ligand>
</feature>
<feature type="binding site" evidence="1">
    <location>
        <begin position="213"/>
        <end position="221"/>
    </location>
    <ligand>
        <name>GTP</name>
        <dbReference type="ChEBI" id="CHEBI:37565"/>
    </ligand>
</feature>
<feature type="binding site" evidence="1">
    <location>
        <position position="297"/>
    </location>
    <ligand>
        <name>Zn(2+)</name>
        <dbReference type="ChEBI" id="CHEBI:29105"/>
    </ligand>
</feature>
<feature type="binding site" evidence="1">
    <location>
        <position position="302"/>
    </location>
    <ligand>
        <name>Zn(2+)</name>
        <dbReference type="ChEBI" id="CHEBI:29105"/>
    </ligand>
</feature>
<feature type="binding site" evidence="1">
    <location>
        <position position="304"/>
    </location>
    <ligand>
        <name>Zn(2+)</name>
        <dbReference type="ChEBI" id="CHEBI:29105"/>
    </ligand>
</feature>
<feature type="binding site" evidence="1">
    <location>
        <position position="310"/>
    </location>
    <ligand>
        <name>Zn(2+)</name>
        <dbReference type="ChEBI" id="CHEBI:29105"/>
    </ligand>
</feature>